<gene>
    <name evidence="1" type="primary">atpG</name>
    <name type="ordered locus">Pput_5296</name>
</gene>
<keyword id="KW-0066">ATP synthesis</keyword>
<keyword id="KW-0997">Cell inner membrane</keyword>
<keyword id="KW-1003">Cell membrane</keyword>
<keyword id="KW-0139">CF(1)</keyword>
<keyword id="KW-0375">Hydrogen ion transport</keyword>
<keyword id="KW-0406">Ion transport</keyword>
<keyword id="KW-0472">Membrane</keyword>
<keyword id="KW-0813">Transport</keyword>
<sequence>MAGAKEIRSKIASIKSTQKITSAMEKVAVSKMRKAQMRMAASRPYAERIRQVIGHLANANPEYRHPFMIERPVKRAGYIVVSSDRGLCGGLNTNLFKALVKDMSANREQGVEIDLCVIGSKGATFFRIFGGNVVAAISHLGEEPSINDLIGSVKVMLDAYLDGRIDRLSVVSNKFINTMTQKPTVEQLVPLVATPDQDLKHHWDYLYEPDAKELLDGLMVRYVESQVYQAVVENNAAEQAARMIAMKNATDNAGDLIKELQLIYNKARQAAITQEISEIVGGAAAV</sequence>
<dbReference type="EMBL" id="CP000712">
    <property type="protein sequence ID" value="ABQ81414.1"/>
    <property type="molecule type" value="Genomic_DNA"/>
</dbReference>
<dbReference type="SMR" id="A5WBA4"/>
<dbReference type="KEGG" id="ppf:Pput_5296"/>
<dbReference type="eggNOG" id="COG0224">
    <property type="taxonomic scope" value="Bacteria"/>
</dbReference>
<dbReference type="HOGENOM" id="CLU_050669_0_1_6"/>
<dbReference type="GO" id="GO:0005886">
    <property type="term" value="C:plasma membrane"/>
    <property type="evidence" value="ECO:0007669"/>
    <property type="project" value="UniProtKB-SubCell"/>
</dbReference>
<dbReference type="GO" id="GO:0045259">
    <property type="term" value="C:proton-transporting ATP synthase complex"/>
    <property type="evidence" value="ECO:0007669"/>
    <property type="project" value="UniProtKB-KW"/>
</dbReference>
<dbReference type="GO" id="GO:0005524">
    <property type="term" value="F:ATP binding"/>
    <property type="evidence" value="ECO:0007669"/>
    <property type="project" value="UniProtKB-UniRule"/>
</dbReference>
<dbReference type="GO" id="GO:0046933">
    <property type="term" value="F:proton-transporting ATP synthase activity, rotational mechanism"/>
    <property type="evidence" value="ECO:0007669"/>
    <property type="project" value="UniProtKB-UniRule"/>
</dbReference>
<dbReference type="GO" id="GO:0042777">
    <property type="term" value="P:proton motive force-driven plasma membrane ATP synthesis"/>
    <property type="evidence" value="ECO:0007669"/>
    <property type="project" value="UniProtKB-UniRule"/>
</dbReference>
<dbReference type="CDD" id="cd12151">
    <property type="entry name" value="F1-ATPase_gamma"/>
    <property type="match status" value="1"/>
</dbReference>
<dbReference type="FunFam" id="1.10.287.80:FF:000005">
    <property type="entry name" value="ATP synthase gamma chain"/>
    <property type="match status" value="1"/>
</dbReference>
<dbReference type="FunFam" id="3.40.1380.10:FF:000001">
    <property type="entry name" value="ATP synthase gamma chain"/>
    <property type="match status" value="1"/>
</dbReference>
<dbReference type="Gene3D" id="3.40.1380.10">
    <property type="match status" value="1"/>
</dbReference>
<dbReference type="Gene3D" id="1.10.287.80">
    <property type="entry name" value="ATP synthase, gamma subunit, helix hairpin domain"/>
    <property type="match status" value="1"/>
</dbReference>
<dbReference type="HAMAP" id="MF_00815">
    <property type="entry name" value="ATP_synth_gamma_bact"/>
    <property type="match status" value="1"/>
</dbReference>
<dbReference type="InterPro" id="IPR035968">
    <property type="entry name" value="ATP_synth_F1_ATPase_gsu"/>
</dbReference>
<dbReference type="InterPro" id="IPR000131">
    <property type="entry name" value="ATP_synth_F1_gsu"/>
</dbReference>
<dbReference type="InterPro" id="IPR023632">
    <property type="entry name" value="ATP_synth_F1_gsu_CS"/>
</dbReference>
<dbReference type="NCBIfam" id="TIGR01146">
    <property type="entry name" value="ATPsyn_F1gamma"/>
    <property type="match status" value="1"/>
</dbReference>
<dbReference type="NCBIfam" id="NF004144">
    <property type="entry name" value="PRK05621.1-1"/>
    <property type="match status" value="1"/>
</dbReference>
<dbReference type="PANTHER" id="PTHR11693">
    <property type="entry name" value="ATP SYNTHASE GAMMA CHAIN"/>
    <property type="match status" value="1"/>
</dbReference>
<dbReference type="PANTHER" id="PTHR11693:SF22">
    <property type="entry name" value="ATP SYNTHASE SUBUNIT GAMMA, MITOCHONDRIAL"/>
    <property type="match status" value="1"/>
</dbReference>
<dbReference type="Pfam" id="PF00231">
    <property type="entry name" value="ATP-synt"/>
    <property type="match status" value="1"/>
</dbReference>
<dbReference type="PRINTS" id="PR00126">
    <property type="entry name" value="ATPASEGAMMA"/>
</dbReference>
<dbReference type="SUPFAM" id="SSF52943">
    <property type="entry name" value="ATP synthase (F1-ATPase), gamma subunit"/>
    <property type="match status" value="1"/>
</dbReference>
<dbReference type="PROSITE" id="PS00153">
    <property type="entry name" value="ATPASE_GAMMA"/>
    <property type="match status" value="1"/>
</dbReference>
<evidence type="ECO:0000255" key="1">
    <source>
        <dbReference type="HAMAP-Rule" id="MF_00815"/>
    </source>
</evidence>
<comment type="function">
    <text evidence="1">Produces ATP from ADP in the presence of a proton gradient across the membrane. The gamma chain is believed to be important in regulating ATPase activity and the flow of protons through the CF(0) complex.</text>
</comment>
<comment type="subunit">
    <text evidence="1">F-type ATPases have 2 components, CF(1) - the catalytic core - and CF(0) - the membrane proton channel. CF(1) has five subunits: alpha(3), beta(3), gamma(1), delta(1), epsilon(1). CF(0) has three main subunits: a, b and c.</text>
</comment>
<comment type="subcellular location">
    <subcellularLocation>
        <location evidence="1">Cell inner membrane</location>
        <topology evidence="1">Peripheral membrane protein</topology>
    </subcellularLocation>
</comment>
<comment type="similarity">
    <text evidence="1">Belongs to the ATPase gamma chain family.</text>
</comment>
<organism>
    <name type="scientific">Pseudomonas putida (strain ATCC 700007 / DSM 6899 / JCM 31910 / BCRC 17059 / LMG 24140 / F1)</name>
    <dbReference type="NCBI Taxonomy" id="351746"/>
    <lineage>
        <taxon>Bacteria</taxon>
        <taxon>Pseudomonadati</taxon>
        <taxon>Pseudomonadota</taxon>
        <taxon>Gammaproteobacteria</taxon>
        <taxon>Pseudomonadales</taxon>
        <taxon>Pseudomonadaceae</taxon>
        <taxon>Pseudomonas</taxon>
    </lineage>
</organism>
<accession>A5WBA4</accession>
<name>ATPG_PSEP1</name>
<protein>
    <recommendedName>
        <fullName evidence="1">ATP synthase gamma chain</fullName>
    </recommendedName>
    <alternativeName>
        <fullName evidence="1">ATP synthase F1 sector gamma subunit</fullName>
    </alternativeName>
    <alternativeName>
        <fullName evidence="1">F-ATPase gamma subunit</fullName>
    </alternativeName>
</protein>
<proteinExistence type="inferred from homology"/>
<feature type="chain" id="PRO_1000053295" description="ATP synthase gamma chain">
    <location>
        <begin position="1"/>
        <end position="286"/>
    </location>
</feature>
<reference key="1">
    <citation type="submission" date="2007-05" db="EMBL/GenBank/DDBJ databases">
        <title>Complete sequence of Pseudomonas putida F1.</title>
        <authorList>
            <consortium name="US DOE Joint Genome Institute"/>
            <person name="Copeland A."/>
            <person name="Lucas S."/>
            <person name="Lapidus A."/>
            <person name="Barry K."/>
            <person name="Detter J.C."/>
            <person name="Glavina del Rio T."/>
            <person name="Hammon N."/>
            <person name="Israni S."/>
            <person name="Dalin E."/>
            <person name="Tice H."/>
            <person name="Pitluck S."/>
            <person name="Chain P."/>
            <person name="Malfatti S."/>
            <person name="Shin M."/>
            <person name="Vergez L."/>
            <person name="Schmutz J."/>
            <person name="Larimer F."/>
            <person name="Land M."/>
            <person name="Hauser L."/>
            <person name="Kyrpides N."/>
            <person name="Lykidis A."/>
            <person name="Parales R."/>
            <person name="Richardson P."/>
        </authorList>
    </citation>
    <scope>NUCLEOTIDE SEQUENCE [LARGE SCALE GENOMIC DNA]</scope>
    <source>
        <strain>ATCC 700007 / DSM 6899 / JCM 31910 / BCRC 17059 / LMG 24140 / F1</strain>
    </source>
</reference>